<sequence length="16" mass="1727">IVSYPDDAGEHAHKMG</sequence>
<feature type="peptide" id="PRO_0000371737" description="Riparin-5.1" evidence="1">
    <location>
        <begin position="1"/>
        <end position="16"/>
    </location>
</feature>
<feature type="modified residue" description="Glycine amide" evidence="1">
    <location>
        <position position="16"/>
    </location>
</feature>
<name>RIP51_CRIRI</name>
<organism>
    <name type="scientific">Crinia riparia</name>
    <name type="common">Streambank froglet</name>
    <name type="synonym">Flinders Ranges froglet</name>
    <dbReference type="NCBI Taxonomy" id="446489"/>
    <lineage>
        <taxon>Eukaryota</taxon>
        <taxon>Metazoa</taxon>
        <taxon>Chordata</taxon>
        <taxon>Craniata</taxon>
        <taxon>Vertebrata</taxon>
        <taxon>Euteleostomi</taxon>
        <taxon>Amphibia</taxon>
        <taxon>Batrachia</taxon>
        <taxon>Anura</taxon>
        <taxon>Neobatrachia</taxon>
        <taxon>Myobatrachoidea</taxon>
        <taxon>Myobatrachidae</taxon>
        <taxon>Myobatrachinae</taxon>
        <taxon>Crinia</taxon>
    </lineage>
</organism>
<evidence type="ECO:0000269" key="1">
    <source>
    </source>
</evidence>
<evidence type="ECO:0000269" key="2">
    <source>
    </source>
</evidence>
<evidence type="ECO:0000303" key="3">
    <source>
    </source>
</evidence>
<evidence type="ECO:0000305" key="4"/>
<reference evidence="4" key="1">
    <citation type="journal article" date="2006" name="Rapid Commun. Mass Spectrom.">
        <title>Host-defence skin peptides of the Australian streambank froglet Crinia riparia: isolation and sequence determination by positive and negative ion electrospray mass spectrometry.</title>
        <authorList>
            <person name="Maselli V.M."/>
            <person name="Bilusich D."/>
            <person name="Bowie J.H."/>
            <person name="Tyler M.J."/>
        </authorList>
    </citation>
    <scope>PROTEIN SEQUENCE</scope>
    <scope>FUNCTION</scope>
    <scope>SUBCELLULAR LOCATION</scope>
    <scope>TISSUE SPECIFICITY</scope>
    <scope>AMIDATION AT GLY-16</scope>
    <source>
        <tissue evidence="1">Skin secretion</tissue>
    </source>
</reference>
<reference evidence="4" key="2">
    <citation type="journal article" date="2008" name="Regul. Pept.">
        <title>Disulfide-containing peptides from the glandular skin secretions of froglets of the genus Crinia: structure, activity and evolutionary trends.</title>
        <authorList>
            <person name="Jackway R.J."/>
            <person name="Pukala T.L."/>
            <person name="Maselli V.M."/>
            <person name="Musgrave I.F."/>
            <person name="Bowie J.H."/>
            <person name="Liu Y."/>
            <person name="Surinya-Johnson K.H."/>
            <person name="Donnellan S.C."/>
            <person name="Doyle J.R."/>
            <person name="Llewellyn L.E."/>
            <person name="Tyler M.J."/>
        </authorList>
    </citation>
    <scope>FUNCTION</scope>
    <scope>DISCUSSION OF SEQUENCE</scope>
</reference>
<protein>
    <recommendedName>
        <fullName evidence="3">Riparin-5.1</fullName>
    </recommendedName>
</protein>
<proteinExistence type="evidence at protein level"/>
<keyword id="KW-0027">Amidation</keyword>
<keyword id="KW-0878">Amphibian defense peptide</keyword>
<keyword id="KW-0903">Direct protein sequencing</keyword>
<keyword id="KW-0964">Secreted</keyword>
<accession>P86129</accession>
<comment type="function">
    <text evidence="1 2">Has no antimicrobial activity. Does not inhibit the formation of NO by neuronal nitric oxide synthase.</text>
</comment>
<comment type="subcellular location">
    <subcellularLocation>
        <location evidence="1">Secreted</location>
    </subcellularLocation>
</comment>
<comment type="tissue specificity">
    <text evidence="1">Expressed by the skin glands.</text>
</comment>
<dbReference type="GO" id="GO:0005576">
    <property type="term" value="C:extracellular region"/>
    <property type="evidence" value="ECO:0000314"/>
    <property type="project" value="UniProtKB"/>
</dbReference>
<dbReference type="GO" id="GO:0006952">
    <property type="term" value="P:defense response"/>
    <property type="evidence" value="ECO:0007669"/>
    <property type="project" value="UniProtKB-KW"/>
</dbReference>